<proteinExistence type="predicted"/>
<gene>
    <name type="primary">yopN</name>
    <name type="ordered locus">SPBc2p085</name>
</gene>
<feature type="chain" id="PRO_0000049663" description="Uncharacterized protein yopN">
    <location>
        <begin position="1"/>
        <end position="105"/>
    </location>
</feature>
<sequence>MHVVELRSTNHKDIDADFVLNAKQTYIESVLNIRKMIVNAKTEDDLHGAKIEIAALLKDLNRVLLGGDGLKRSIENNPHFRSLIHFVKNLKRHIAIEFEEFIYQP</sequence>
<accession>P68582</accession>
<accession>O34369</accession>
<accession>O64097</accession>
<reference key="1">
    <citation type="journal article" date="1999" name="Microbiology">
        <title>Nucleotide sequence of the Bacillus subtilis temperate bacteriophage SPbetac2.</title>
        <authorList>
            <person name="Lazarevic V."/>
            <person name="Duesterhoeft A."/>
            <person name="Soldo B."/>
            <person name="Hilbert H."/>
            <person name="Mauel C."/>
            <person name="Karamata D."/>
        </authorList>
    </citation>
    <scope>NUCLEOTIDE SEQUENCE [LARGE SCALE GENOMIC DNA]</scope>
</reference>
<keyword id="KW-1185">Reference proteome</keyword>
<organism>
    <name type="scientific">Bacillus phage SPbeta</name>
    <name type="common">Bacillus phage SPBc2</name>
    <name type="synonym">Bacteriophage SP-beta</name>
    <dbReference type="NCBI Taxonomy" id="2932878"/>
    <lineage>
        <taxon>Viruses</taxon>
        <taxon>Duplodnaviria</taxon>
        <taxon>Heunggongvirae</taxon>
        <taxon>Uroviricota</taxon>
        <taxon>Caudoviricetes</taxon>
        <taxon>Spbetavirus</taxon>
        <taxon>Spbetavirus SPbeta</taxon>
    </lineage>
</organism>
<name>YOPN_BPSPB</name>
<dbReference type="EMBL" id="AF020713">
    <property type="protein sequence ID" value="AAC13057.1"/>
    <property type="molecule type" value="Genomic_DNA"/>
</dbReference>
<dbReference type="PIR" id="T12848">
    <property type="entry name" value="T12848"/>
</dbReference>
<dbReference type="RefSeq" id="NP_046636.1">
    <property type="nucleotide sequence ID" value="NC_001884.1"/>
</dbReference>
<dbReference type="SMR" id="P68582"/>
<dbReference type="GeneID" id="1261352"/>
<dbReference type="KEGG" id="vg:1261352"/>
<dbReference type="Proteomes" id="UP000009091">
    <property type="component" value="Genome"/>
</dbReference>
<protein>
    <recommendedName>
        <fullName>Uncharacterized protein yopN</fullName>
    </recommendedName>
</protein>
<organismHost>
    <name type="scientific">Bacillus pumilus</name>
    <name type="common">Bacillus mesentericus</name>
    <dbReference type="NCBI Taxonomy" id="1408"/>
</organismHost>
<organismHost>
    <name type="scientific">Bacillus subtilis</name>
    <dbReference type="NCBI Taxonomy" id="1423"/>
</organismHost>